<dbReference type="EMBL" id="AE014298">
    <property type="protein sequence ID" value="AAF45682.1"/>
    <property type="molecule type" value="Genomic_DNA"/>
</dbReference>
<dbReference type="EMBL" id="AL021106">
    <property type="protein sequence ID" value="CAA15943.1"/>
    <property type="molecule type" value="Genomic_DNA"/>
</dbReference>
<dbReference type="EMBL" id="AY071011">
    <property type="protein sequence ID" value="AAL48633.1"/>
    <property type="molecule type" value="mRNA"/>
</dbReference>
<dbReference type="EMBL" id="AY071746">
    <property type="protein sequence ID" value="AAL49368.1"/>
    <property type="molecule type" value="mRNA"/>
</dbReference>
<dbReference type="EMBL" id="BT072895">
    <property type="protein sequence ID" value="ACN71214.1"/>
    <property type="molecule type" value="mRNA"/>
</dbReference>
<dbReference type="PIR" id="T12686">
    <property type="entry name" value="T12686"/>
</dbReference>
<dbReference type="RefSeq" id="NP_001259146.1">
    <property type="nucleotide sequence ID" value="NM_001272217.1"/>
</dbReference>
<dbReference type="RefSeq" id="NP_569955.1">
    <property type="nucleotide sequence ID" value="NM_130599.3"/>
</dbReference>
<dbReference type="SMR" id="O97420"/>
<dbReference type="BioGRID" id="57693">
    <property type="interactions" value="29"/>
</dbReference>
<dbReference type="DIP" id="DIP-20162N"/>
<dbReference type="IntAct" id="O97420">
    <property type="interactions" value="19"/>
</dbReference>
<dbReference type="STRING" id="7227.FBpp0303803"/>
<dbReference type="PaxDb" id="7227-FBpp0303803"/>
<dbReference type="DNASU" id="31147"/>
<dbReference type="EnsemblMetazoa" id="FBtr0070364">
    <property type="protein sequence ID" value="FBpp0070348"/>
    <property type="gene ID" value="FBgn0026088"/>
</dbReference>
<dbReference type="EnsemblMetazoa" id="FBtr0331385">
    <property type="protein sequence ID" value="FBpp0303803"/>
    <property type="gene ID" value="FBgn0026088"/>
</dbReference>
<dbReference type="GeneID" id="31147"/>
<dbReference type="KEGG" id="dme:Dmel_CG14818"/>
<dbReference type="UCSC" id="CG14818-RA">
    <property type="organism name" value="d. melanogaster"/>
</dbReference>
<dbReference type="AGR" id="FB:FBgn0026088"/>
<dbReference type="FlyBase" id="FBgn0026088">
    <property type="gene designation" value="CG14818"/>
</dbReference>
<dbReference type="VEuPathDB" id="VectorBase:FBgn0026088"/>
<dbReference type="eggNOG" id="ENOG502TCQ3">
    <property type="taxonomic scope" value="Eukaryota"/>
</dbReference>
<dbReference type="HOGENOM" id="CLU_2335822_0_0_1"/>
<dbReference type="InParanoid" id="O97420"/>
<dbReference type="OMA" id="DDMNGQP"/>
<dbReference type="OrthoDB" id="10050612at2759"/>
<dbReference type="PhylomeDB" id="O97420"/>
<dbReference type="BioGRID-ORCS" id="31147">
    <property type="hits" value="0 hits in 1 CRISPR screen"/>
</dbReference>
<dbReference type="GenomeRNAi" id="31147"/>
<dbReference type="PRO" id="PR:O97420"/>
<dbReference type="Proteomes" id="UP000000803">
    <property type="component" value="Chromosome X"/>
</dbReference>
<dbReference type="Bgee" id="FBgn0026088">
    <property type="expression patterns" value="Expressed in seminal fluid secreting gland and 213 other cell types or tissues"/>
</dbReference>
<dbReference type="ExpressionAtlas" id="O97420">
    <property type="expression patterns" value="baseline and differential"/>
</dbReference>
<dbReference type="InterPro" id="IPR005374">
    <property type="entry name" value="BBLN_eukaryota"/>
</dbReference>
<dbReference type="PANTHER" id="PTHR34344:SF1">
    <property type="entry name" value="BUBLIN COILED-COIL PROTEIN"/>
    <property type="match status" value="1"/>
</dbReference>
<dbReference type="PANTHER" id="PTHR34344">
    <property type="entry name" value="UPF0184 PROTEIN C9ORF16"/>
    <property type="match status" value="1"/>
</dbReference>
<dbReference type="Pfam" id="PF03670">
    <property type="entry name" value="UPF0184"/>
    <property type="match status" value="1"/>
</dbReference>
<comment type="interaction">
    <interactant intactId="EBI-99679">
        <id>O97420</id>
    </interactant>
    <interactant intactId="EBI-195214">
        <id>Q9VTY4</id>
        <label>CG10681</label>
    </interactant>
    <organismsDiffer>false</organismsDiffer>
    <experiments>4</experiments>
</comment>
<comment type="interaction">
    <interactant intactId="EBI-99679">
        <id>O97420</id>
    </interactant>
    <interactant intactId="EBI-95177">
        <id>Q8T414</id>
        <label>CG15468</label>
    </interactant>
    <organismsDiffer>false</organismsDiffer>
    <experiments>3</experiments>
</comment>
<comment type="interaction">
    <interactant intactId="EBI-99679">
        <id>O97420</id>
    </interactant>
    <interactant intactId="EBI-173665">
        <id>Q4V5L1</id>
        <label>Dmel\CG15124</label>
    </interactant>
    <organismsDiffer>false</organismsDiffer>
    <experiments>4</experiments>
</comment>
<comment type="interaction">
    <interactant intactId="EBI-99679">
        <id>O97420</id>
    </interactant>
    <interactant intactId="EBI-147345">
        <id>Q9VUG4</id>
        <label>gdrd</label>
    </interactant>
    <organismsDiffer>false</organismsDiffer>
    <experiments>4</experiments>
</comment>
<comment type="interaction">
    <interactant intactId="EBI-99679">
        <id>O97420</id>
    </interactant>
    <interactant intactId="EBI-158035">
        <id>Q9V7D2</id>
        <label>Vha36-1</label>
    </interactant>
    <organismsDiffer>false</organismsDiffer>
    <experiments>3</experiments>
</comment>
<comment type="similarity">
    <text evidence="3">Belongs to the UPF0184 (EST00098) family.</text>
</comment>
<organism>
    <name type="scientific">Drosophila melanogaster</name>
    <name type="common">Fruit fly</name>
    <dbReference type="NCBI Taxonomy" id="7227"/>
    <lineage>
        <taxon>Eukaryota</taxon>
        <taxon>Metazoa</taxon>
        <taxon>Ecdysozoa</taxon>
        <taxon>Arthropoda</taxon>
        <taxon>Hexapoda</taxon>
        <taxon>Insecta</taxon>
        <taxon>Pterygota</taxon>
        <taxon>Neoptera</taxon>
        <taxon>Endopterygota</taxon>
        <taxon>Diptera</taxon>
        <taxon>Brachycera</taxon>
        <taxon>Muscomorpha</taxon>
        <taxon>Ephydroidea</taxon>
        <taxon>Drosophilidae</taxon>
        <taxon>Drosophila</taxon>
        <taxon>Sophophora</taxon>
    </lineage>
</organism>
<feature type="chain" id="PRO_0000195164" description="UPF0184 protein CG14818">
    <location>
        <begin position="1"/>
        <end position="96"/>
    </location>
</feature>
<feature type="region of interest" description="Disordered" evidence="2">
    <location>
        <begin position="1"/>
        <end position="28"/>
    </location>
</feature>
<feature type="region of interest" description="Disordered" evidence="2">
    <location>
        <begin position="70"/>
        <end position="96"/>
    </location>
</feature>
<feature type="coiled-coil region" evidence="1">
    <location>
        <begin position="21"/>
        <end position="77"/>
    </location>
</feature>
<feature type="compositionally biased region" description="Polar residues" evidence="2">
    <location>
        <begin position="8"/>
        <end position="21"/>
    </location>
</feature>
<feature type="compositionally biased region" description="Acidic residues" evidence="2">
    <location>
        <begin position="72"/>
        <end position="85"/>
    </location>
</feature>
<evidence type="ECO:0000255" key="1"/>
<evidence type="ECO:0000256" key="2">
    <source>
        <dbReference type="SAM" id="MobiDB-lite"/>
    </source>
</evidence>
<evidence type="ECO:0000305" key="3"/>
<name>U184_DROME</name>
<accession>O97420</accession>
<accession>C0PV39</accession>
<reference key="1">
    <citation type="journal article" date="2000" name="Science">
        <title>The genome sequence of Drosophila melanogaster.</title>
        <authorList>
            <person name="Adams M.D."/>
            <person name="Celniker S.E."/>
            <person name="Holt R.A."/>
            <person name="Evans C.A."/>
            <person name="Gocayne J.D."/>
            <person name="Amanatides P.G."/>
            <person name="Scherer S.E."/>
            <person name="Li P.W."/>
            <person name="Hoskins R.A."/>
            <person name="Galle R.F."/>
            <person name="George R.A."/>
            <person name="Lewis S.E."/>
            <person name="Richards S."/>
            <person name="Ashburner M."/>
            <person name="Henderson S.N."/>
            <person name="Sutton G.G."/>
            <person name="Wortman J.R."/>
            <person name="Yandell M.D."/>
            <person name="Zhang Q."/>
            <person name="Chen L.X."/>
            <person name="Brandon R.C."/>
            <person name="Rogers Y.-H.C."/>
            <person name="Blazej R.G."/>
            <person name="Champe M."/>
            <person name="Pfeiffer B.D."/>
            <person name="Wan K.H."/>
            <person name="Doyle C."/>
            <person name="Baxter E.G."/>
            <person name="Helt G."/>
            <person name="Nelson C.R."/>
            <person name="Miklos G.L.G."/>
            <person name="Abril J.F."/>
            <person name="Agbayani A."/>
            <person name="An H.-J."/>
            <person name="Andrews-Pfannkoch C."/>
            <person name="Baldwin D."/>
            <person name="Ballew R.M."/>
            <person name="Basu A."/>
            <person name="Baxendale J."/>
            <person name="Bayraktaroglu L."/>
            <person name="Beasley E.M."/>
            <person name="Beeson K.Y."/>
            <person name="Benos P.V."/>
            <person name="Berman B.P."/>
            <person name="Bhandari D."/>
            <person name="Bolshakov S."/>
            <person name="Borkova D."/>
            <person name="Botchan M.R."/>
            <person name="Bouck J."/>
            <person name="Brokstein P."/>
            <person name="Brottier P."/>
            <person name="Burtis K.C."/>
            <person name="Busam D.A."/>
            <person name="Butler H."/>
            <person name="Cadieu E."/>
            <person name="Center A."/>
            <person name="Chandra I."/>
            <person name="Cherry J.M."/>
            <person name="Cawley S."/>
            <person name="Dahlke C."/>
            <person name="Davenport L.B."/>
            <person name="Davies P."/>
            <person name="de Pablos B."/>
            <person name="Delcher A."/>
            <person name="Deng Z."/>
            <person name="Mays A.D."/>
            <person name="Dew I."/>
            <person name="Dietz S.M."/>
            <person name="Dodson K."/>
            <person name="Doup L.E."/>
            <person name="Downes M."/>
            <person name="Dugan-Rocha S."/>
            <person name="Dunkov B.C."/>
            <person name="Dunn P."/>
            <person name="Durbin K.J."/>
            <person name="Evangelista C.C."/>
            <person name="Ferraz C."/>
            <person name="Ferriera S."/>
            <person name="Fleischmann W."/>
            <person name="Fosler C."/>
            <person name="Gabrielian A.E."/>
            <person name="Garg N.S."/>
            <person name="Gelbart W.M."/>
            <person name="Glasser K."/>
            <person name="Glodek A."/>
            <person name="Gong F."/>
            <person name="Gorrell J.H."/>
            <person name="Gu Z."/>
            <person name="Guan P."/>
            <person name="Harris M."/>
            <person name="Harris N.L."/>
            <person name="Harvey D.A."/>
            <person name="Heiman T.J."/>
            <person name="Hernandez J.R."/>
            <person name="Houck J."/>
            <person name="Hostin D."/>
            <person name="Houston K.A."/>
            <person name="Howland T.J."/>
            <person name="Wei M.-H."/>
            <person name="Ibegwam C."/>
            <person name="Jalali M."/>
            <person name="Kalush F."/>
            <person name="Karpen G.H."/>
            <person name="Ke Z."/>
            <person name="Kennison J.A."/>
            <person name="Ketchum K.A."/>
            <person name="Kimmel B.E."/>
            <person name="Kodira C.D."/>
            <person name="Kraft C.L."/>
            <person name="Kravitz S."/>
            <person name="Kulp D."/>
            <person name="Lai Z."/>
            <person name="Lasko P."/>
            <person name="Lei Y."/>
            <person name="Levitsky A.A."/>
            <person name="Li J.H."/>
            <person name="Li Z."/>
            <person name="Liang Y."/>
            <person name="Lin X."/>
            <person name="Liu X."/>
            <person name="Mattei B."/>
            <person name="McIntosh T.C."/>
            <person name="McLeod M.P."/>
            <person name="McPherson D."/>
            <person name="Merkulov G."/>
            <person name="Milshina N.V."/>
            <person name="Mobarry C."/>
            <person name="Morris J."/>
            <person name="Moshrefi A."/>
            <person name="Mount S.M."/>
            <person name="Moy M."/>
            <person name="Murphy B."/>
            <person name="Murphy L."/>
            <person name="Muzny D.M."/>
            <person name="Nelson D.L."/>
            <person name="Nelson D.R."/>
            <person name="Nelson K.A."/>
            <person name="Nixon K."/>
            <person name="Nusskern D.R."/>
            <person name="Pacleb J.M."/>
            <person name="Palazzolo M."/>
            <person name="Pittman G.S."/>
            <person name="Pan S."/>
            <person name="Pollard J."/>
            <person name="Puri V."/>
            <person name="Reese M.G."/>
            <person name="Reinert K."/>
            <person name="Remington K."/>
            <person name="Saunders R.D.C."/>
            <person name="Scheeler F."/>
            <person name="Shen H."/>
            <person name="Shue B.C."/>
            <person name="Siden-Kiamos I."/>
            <person name="Simpson M."/>
            <person name="Skupski M.P."/>
            <person name="Smith T.J."/>
            <person name="Spier E."/>
            <person name="Spradling A.C."/>
            <person name="Stapleton M."/>
            <person name="Strong R."/>
            <person name="Sun E."/>
            <person name="Svirskas R."/>
            <person name="Tector C."/>
            <person name="Turner R."/>
            <person name="Venter E."/>
            <person name="Wang A.H."/>
            <person name="Wang X."/>
            <person name="Wang Z.-Y."/>
            <person name="Wassarman D.A."/>
            <person name="Weinstock G.M."/>
            <person name="Weissenbach J."/>
            <person name="Williams S.M."/>
            <person name="Woodage T."/>
            <person name="Worley K.C."/>
            <person name="Wu D."/>
            <person name="Yang S."/>
            <person name="Yao Q.A."/>
            <person name="Ye J."/>
            <person name="Yeh R.-F."/>
            <person name="Zaveri J.S."/>
            <person name="Zhan M."/>
            <person name="Zhang G."/>
            <person name="Zhao Q."/>
            <person name="Zheng L."/>
            <person name="Zheng X.H."/>
            <person name="Zhong F.N."/>
            <person name="Zhong W."/>
            <person name="Zhou X."/>
            <person name="Zhu S.C."/>
            <person name="Zhu X."/>
            <person name="Smith H.O."/>
            <person name="Gibbs R.A."/>
            <person name="Myers E.W."/>
            <person name="Rubin G.M."/>
            <person name="Venter J.C."/>
        </authorList>
    </citation>
    <scope>NUCLEOTIDE SEQUENCE [LARGE SCALE GENOMIC DNA]</scope>
    <source>
        <strain>Berkeley</strain>
    </source>
</reference>
<reference key="2">
    <citation type="journal article" date="2002" name="Genome Biol.">
        <title>Annotation of the Drosophila melanogaster euchromatic genome: a systematic review.</title>
        <authorList>
            <person name="Misra S."/>
            <person name="Crosby M.A."/>
            <person name="Mungall C.J."/>
            <person name="Matthews B.B."/>
            <person name="Campbell K.S."/>
            <person name="Hradecky P."/>
            <person name="Huang Y."/>
            <person name="Kaminker J.S."/>
            <person name="Millburn G.H."/>
            <person name="Prochnik S.E."/>
            <person name="Smith C.D."/>
            <person name="Tupy J.L."/>
            <person name="Whitfield E.J."/>
            <person name="Bayraktaroglu L."/>
            <person name="Berman B.P."/>
            <person name="Bettencourt B.R."/>
            <person name="Celniker S.E."/>
            <person name="de Grey A.D.N.J."/>
            <person name="Drysdale R.A."/>
            <person name="Harris N.L."/>
            <person name="Richter J."/>
            <person name="Russo S."/>
            <person name="Schroeder A.J."/>
            <person name="Shu S.Q."/>
            <person name="Stapleton M."/>
            <person name="Yamada C."/>
            <person name="Ashburner M."/>
            <person name="Gelbart W.M."/>
            <person name="Rubin G.M."/>
            <person name="Lewis S.E."/>
        </authorList>
    </citation>
    <scope>GENOME REANNOTATION</scope>
    <source>
        <strain>Berkeley</strain>
    </source>
</reference>
<reference key="3">
    <citation type="journal article" date="2000" name="Science">
        <title>From sequence to chromosome: the tip of the X chromosome of D. melanogaster.</title>
        <authorList>
            <person name="Benos P.V."/>
            <person name="Gatt M.K."/>
            <person name="Ashburner M."/>
            <person name="Murphy L."/>
            <person name="Harris D."/>
            <person name="Barrell B.G."/>
            <person name="Ferraz C."/>
            <person name="Vidal S."/>
            <person name="Brun C."/>
            <person name="Demailles J."/>
            <person name="Cadieu E."/>
            <person name="Dreano S."/>
            <person name="Gloux S."/>
            <person name="Lelaure V."/>
            <person name="Mottier S."/>
            <person name="Galibert F."/>
            <person name="Borkova D."/>
            <person name="Minana B."/>
            <person name="Kafatos F.C."/>
            <person name="Louis C."/>
            <person name="Siden-Kiamos I."/>
            <person name="Bolshakov S."/>
            <person name="Papagiannakis G."/>
            <person name="Spanos L."/>
            <person name="Cox S."/>
            <person name="Madueno E."/>
            <person name="de Pablos B."/>
            <person name="Modolell J."/>
            <person name="Peter A."/>
            <person name="Schoettler P."/>
            <person name="Werner M."/>
            <person name="Mourkioti F."/>
            <person name="Beinert N."/>
            <person name="Dowe G."/>
            <person name="Schaefer U."/>
            <person name="Jaeckle H."/>
            <person name="Bucheton A."/>
            <person name="Callister D.M."/>
            <person name="Campbell L.A."/>
            <person name="Darlamitsou A."/>
            <person name="Henderson N.S."/>
            <person name="McMillan P.J."/>
            <person name="Salles C."/>
            <person name="Tait E.A."/>
            <person name="Valenti P."/>
            <person name="Saunders R.D.C."/>
            <person name="Glover D.M."/>
        </authorList>
    </citation>
    <scope>NUCLEOTIDE SEQUENCE [LARGE SCALE GENOMIC DNA]</scope>
    <source>
        <strain>Oregon-R</strain>
    </source>
</reference>
<reference key="4">
    <citation type="journal article" date="2002" name="Genome Biol.">
        <title>A Drosophila full-length cDNA resource.</title>
        <authorList>
            <person name="Stapleton M."/>
            <person name="Carlson J.W."/>
            <person name="Brokstein P."/>
            <person name="Yu C."/>
            <person name="Champe M."/>
            <person name="George R.A."/>
            <person name="Guarin H."/>
            <person name="Kronmiller B."/>
            <person name="Pacleb J.M."/>
            <person name="Park S."/>
            <person name="Wan K.H."/>
            <person name="Rubin G.M."/>
            <person name="Celniker S.E."/>
        </authorList>
    </citation>
    <scope>NUCLEOTIDE SEQUENCE [LARGE SCALE MRNA]</scope>
    <source>
        <strain>Berkeley</strain>
        <tissue>Embryo</tissue>
        <tissue>Head</tissue>
    </source>
</reference>
<reference key="5">
    <citation type="submission" date="2009-03" db="EMBL/GenBank/DDBJ databases">
        <authorList>
            <person name="Carlson J.W."/>
            <person name="Booth B."/>
            <person name="Frise E."/>
            <person name="Sandler J."/>
            <person name="Wan K.H."/>
            <person name="Yu C."/>
            <person name="Celniker S.E."/>
        </authorList>
    </citation>
    <scope>NUCLEOTIDE SEQUENCE [LARGE SCALE MRNA]</scope>
    <source>
        <strain>Berkeley</strain>
    </source>
</reference>
<keyword id="KW-0175">Coiled coil</keyword>
<keyword id="KW-1185">Reference proteome</keyword>
<proteinExistence type="evidence at protein level"/>
<gene>
    <name type="ORF">CG14818</name>
</gene>
<protein>
    <recommendedName>
        <fullName>UPF0184 protein CG14818</fullName>
    </recommendedName>
</protein>
<sequence length="96" mass="10404">MSPKNNHDPSSSGDSGNTNVQEADLQEMEDVNNSLDALSCALDAVEQRTDDIMSQLRELLNSNREIRRLIAEENDNAPESGDDNMDGQAGSEAAPK</sequence>